<sequence length="186" mass="20833">MNPALSQHYREILVGLGEDPQREGLLDTPKRAAKAMQYLCHGYGQTLEEIVNGALFASDNDEMVIVRDIELYSLCEHHLLPFIGKAHVAYIPTGKVLGLSKVARIVDMFARRLQIQENLTRQIAEAVRQVTSAAGVAVVIEAQHMCMMMRGVEKQNSQMFTSVMLGAFRDSNTTRQEFLQLIGRSK</sequence>
<gene>
    <name type="primary">folE1</name>
    <name type="ordered locus">PA3438</name>
</gene>
<dbReference type="EC" id="3.5.4.16"/>
<dbReference type="EMBL" id="AE004091">
    <property type="protein sequence ID" value="AAG06826.1"/>
    <property type="molecule type" value="Genomic_DNA"/>
</dbReference>
<dbReference type="PIR" id="D83217">
    <property type="entry name" value="D83217"/>
</dbReference>
<dbReference type="RefSeq" id="NP_252128.1">
    <property type="nucleotide sequence ID" value="NC_002516.2"/>
</dbReference>
<dbReference type="SMR" id="Q9HYG8"/>
<dbReference type="FunCoup" id="Q9HYG8">
    <property type="interactions" value="582"/>
</dbReference>
<dbReference type="STRING" id="208964.PA3438"/>
<dbReference type="PaxDb" id="208964-PA3438"/>
<dbReference type="GeneID" id="878765"/>
<dbReference type="KEGG" id="pae:PA3438"/>
<dbReference type="PATRIC" id="fig|208964.12.peg.3599"/>
<dbReference type="PseudoCAP" id="PA3438"/>
<dbReference type="HOGENOM" id="CLU_049768_3_1_6"/>
<dbReference type="InParanoid" id="Q9HYG8"/>
<dbReference type="OrthoDB" id="9801207at2"/>
<dbReference type="PhylomeDB" id="Q9HYG8"/>
<dbReference type="BioCyc" id="PAER208964:G1FZ6-3505-MONOMER"/>
<dbReference type="UniPathway" id="UPA00848">
    <property type="reaction ID" value="UER00151"/>
</dbReference>
<dbReference type="Proteomes" id="UP000002438">
    <property type="component" value="Chromosome"/>
</dbReference>
<dbReference type="GO" id="GO:0005737">
    <property type="term" value="C:cytoplasm"/>
    <property type="evidence" value="ECO:0000318"/>
    <property type="project" value="GO_Central"/>
</dbReference>
<dbReference type="GO" id="GO:0005525">
    <property type="term" value="F:GTP binding"/>
    <property type="evidence" value="ECO:0000318"/>
    <property type="project" value="GO_Central"/>
</dbReference>
<dbReference type="GO" id="GO:0003934">
    <property type="term" value="F:GTP cyclohydrolase I activity"/>
    <property type="evidence" value="ECO:0000318"/>
    <property type="project" value="GO_Central"/>
</dbReference>
<dbReference type="GO" id="GO:0008270">
    <property type="term" value="F:zinc ion binding"/>
    <property type="evidence" value="ECO:0000318"/>
    <property type="project" value="GO_Central"/>
</dbReference>
<dbReference type="GO" id="GO:0006730">
    <property type="term" value="P:one-carbon metabolic process"/>
    <property type="evidence" value="ECO:0007669"/>
    <property type="project" value="UniProtKB-UniRule"/>
</dbReference>
<dbReference type="GO" id="GO:0006729">
    <property type="term" value="P:tetrahydrobiopterin biosynthetic process"/>
    <property type="evidence" value="ECO:0000318"/>
    <property type="project" value="GO_Central"/>
</dbReference>
<dbReference type="GO" id="GO:0046654">
    <property type="term" value="P:tetrahydrofolate biosynthetic process"/>
    <property type="evidence" value="ECO:0007669"/>
    <property type="project" value="UniProtKB-UniRule"/>
</dbReference>
<dbReference type="CDD" id="cd00642">
    <property type="entry name" value="GTP_cyclohydro1"/>
    <property type="match status" value="1"/>
</dbReference>
<dbReference type="FunFam" id="1.10.286.10:FF:000009">
    <property type="entry name" value="GTP cyclohydrolase 1"/>
    <property type="match status" value="1"/>
</dbReference>
<dbReference type="FunFam" id="3.30.1130.10:FF:000001">
    <property type="entry name" value="GTP cyclohydrolase 1"/>
    <property type="match status" value="1"/>
</dbReference>
<dbReference type="Gene3D" id="1.10.286.10">
    <property type="match status" value="1"/>
</dbReference>
<dbReference type="Gene3D" id="3.30.1130.10">
    <property type="match status" value="1"/>
</dbReference>
<dbReference type="HAMAP" id="MF_00223">
    <property type="entry name" value="FolE"/>
    <property type="match status" value="1"/>
</dbReference>
<dbReference type="InterPro" id="IPR043133">
    <property type="entry name" value="GTP-CH-I_C/QueF"/>
</dbReference>
<dbReference type="InterPro" id="IPR043134">
    <property type="entry name" value="GTP-CH-I_N"/>
</dbReference>
<dbReference type="InterPro" id="IPR001474">
    <property type="entry name" value="GTP_CycHdrlase_I"/>
</dbReference>
<dbReference type="InterPro" id="IPR018234">
    <property type="entry name" value="GTP_CycHdrlase_I_CS"/>
</dbReference>
<dbReference type="InterPro" id="IPR020602">
    <property type="entry name" value="GTP_CycHdrlase_I_dom"/>
</dbReference>
<dbReference type="NCBIfam" id="TIGR00063">
    <property type="entry name" value="folE"/>
    <property type="match status" value="1"/>
</dbReference>
<dbReference type="NCBIfam" id="NF006825">
    <property type="entry name" value="PRK09347.1-2"/>
    <property type="match status" value="1"/>
</dbReference>
<dbReference type="NCBIfam" id="NF006826">
    <property type="entry name" value="PRK09347.1-3"/>
    <property type="match status" value="1"/>
</dbReference>
<dbReference type="PANTHER" id="PTHR11109:SF7">
    <property type="entry name" value="GTP CYCLOHYDROLASE 1"/>
    <property type="match status" value="1"/>
</dbReference>
<dbReference type="PANTHER" id="PTHR11109">
    <property type="entry name" value="GTP CYCLOHYDROLASE I"/>
    <property type="match status" value="1"/>
</dbReference>
<dbReference type="Pfam" id="PF01227">
    <property type="entry name" value="GTP_cyclohydroI"/>
    <property type="match status" value="1"/>
</dbReference>
<dbReference type="SUPFAM" id="SSF55620">
    <property type="entry name" value="Tetrahydrobiopterin biosynthesis enzymes-like"/>
    <property type="match status" value="1"/>
</dbReference>
<dbReference type="PROSITE" id="PS00859">
    <property type="entry name" value="GTP_CYCLOHYDROL_1_1"/>
    <property type="match status" value="1"/>
</dbReference>
<dbReference type="PROSITE" id="PS00860">
    <property type="entry name" value="GTP_CYCLOHYDROL_1_2"/>
    <property type="match status" value="1"/>
</dbReference>
<feature type="chain" id="PRO_0000119428" description="GTP cyclohydrolase 1 1">
    <location>
        <begin position="1"/>
        <end position="186"/>
    </location>
</feature>
<proteinExistence type="inferred from homology"/>
<organism>
    <name type="scientific">Pseudomonas aeruginosa (strain ATCC 15692 / DSM 22644 / CIP 104116 / JCM 14847 / LMG 12228 / 1C / PRS 101 / PAO1)</name>
    <dbReference type="NCBI Taxonomy" id="208964"/>
    <lineage>
        <taxon>Bacteria</taxon>
        <taxon>Pseudomonadati</taxon>
        <taxon>Pseudomonadota</taxon>
        <taxon>Gammaproteobacteria</taxon>
        <taxon>Pseudomonadales</taxon>
        <taxon>Pseudomonadaceae</taxon>
        <taxon>Pseudomonas</taxon>
    </lineage>
</organism>
<evidence type="ECO:0000250" key="1"/>
<evidence type="ECO:0000305" key="2"/>
<comment type="catalytic activity">
    <reaction>
        <text>GTP + H2O = 7,8-dihydroneopterin 3'-triphosphate + formate + H(+)</text>
        <dbReference type="Rhea" id="RHEA:17473"/>
        <dbReference type="ChEBI" id="CHEBI:15377"/>
        <dbReference type="ChEBI" id="CHEBI:15378"/>
        <dbReference type="ChEBI" id="CHEBI:15740"/>
        <dbReference type="ChEBI" id="CHEBI:37565"/>
        <dbReference type="ChEBI" id="CHEBI:58462"/>
        <dbReference type="EC" id="3.5.4.16"/>
    </reaction>
</comment>
<comment type="pathway">
    <text>Cofactor biosynthesis; 7,8-dihydroneopterin triphosphate biosynthesis; 7,8-dihydroneopterin triphosphate from GTP: step 1/1.</text>
</comment>
<comment type="subunit">
    <text evidence="1">Homomer.</text>
</comment>
<comment type="similarity">
    <text evidence="2">Belongs to the GTP cyclohydrolase I family.</text>
</comment>
<protein>
    <recommendedName>
        <fullName>GTP cyclohydrolase 1 1</fullName>
        <ecNumber>3.5.4.16</ecNumber>
    </recommendedName>
    <alternativeName>
        <fullName>GTP cyclohydrolase I 1</fullName>
        <shortName>GTP-CH-I 1</shortName>
    </alternativeName>
</protein>
<reference key="1">
    <citation type="journal article" date="2000" name="Nature">
        <title>Complete genome sequence of Pseudomonas aeruginosa PAO1, an opportunistic pathogen.</title>
        <authorList>
            <person name="Stover C.K."/>
            <person name="Pham X.-Q.T."/>
            <person name="Erwin A.L."/>
            <person name="Mizoguchi S.D."/>
            <person name="Warrener P."/>
            <person name="Hickey M.J."/>
            <person name="Brinkman F.S.L."/>
            <person name="Hufnagle W.O."/>
            <person name="Kowalik D.J."/>
            <person name="Lagrou M."/>
            <person name="Garber R.L."/>
            <person name="Goltry L."/>
            <person name="Tolentino E."/>
            <person name="Westbrock-Wadman S."/>
            <person name="Yuan Y."/>
            <person name="Brody L.L."/>
            <person name="Coulter S.N."/>
            <person name="Folger K.R."/>
            <person name="Kas A."/>
            <person name="Larbig K."/>
            <person name="Lim R.M."/>
            <person name="Smith K.A."/>
            <person name="Spencer D.H."/>
            <person name="Wong G.K.-S."/>
            <person name="Wu Z."/>
            <person name="Paulsen I.T."/>
            <person name="Reizer J."/>
            <person name="Saier M.H. Jr."/>
            <person name="Hancock R.E.W."/>
            <person name="Lory S."/>
            <person name="Olson M.V."/>
        </authorList>
    </citation>
    <scope>NUCLEOTIDE SEQUENCE [LARGE SCALE GENOMIC DNA]</scope>
    <source>
        <strain>ATCC 15692 / DSM 22644 / CIP 104116 / JCM 14847 / LMG 12228 / 1C / PRS 101 / PAO1</strain>
    </source>
</reference>
<keyword id="KW-0342">GTP-binding</keyword>
<keyword id="KW-0378">Hydrolase</keyword>
<keyword id="KW-0547">Nucleotide-binding</keyword>
<keyword id="KW-0554">One-carbon metabolism</keyword>
<keyword id="KW-1185">Reference proteome</keyword>
<name>GCH11_PSEAE</name>
<accession>Q9HYG8</accession>